<sequence length="254" mass="26228">MAVTDSTVVFISGVGKGIGAGIAKLYLSRPHHIVIGSVRDVSTPSVAELKASPTAPPGSKLLLVHIESTSSTDPAAAVEAIRAQGIDHIDIAIANAGAMPSTVPIEEVDTKDMLENYHINAIGPLLLFQALLPLLKKGTEPKWASVSTTAGSIGLVDPLAAWILPAYGGAKAALNWLTAGIASSQKEWMTTIALHPGLVQTGPGNWVAQKVGMGDKAPVTVGDSAASVVKLIDGLTKESNGKFYNAVDGTEVPW</sequence>
<comment type="function">
    <text evidence="3 4 5">Short-chain dehydrogenase; part of the gene cluster that mediates the biosynthesis of sordarial, a salicylic aldehyde structurally related to the phytotoxin pyriculol (PubMed:19277664, PubMed:28485098, PubMed:30908040). The most interesting aspect of this pathway is formation of an aromatic product from the highly reducing polyketide synthase srdA (PubMed:30908040). SrdA synthesizes a reduced polyketide chain from one molecule of acetyl-CoA and five molecules of malonyl-CoA (PubMed:30908040). The polyketide chain is then reductively released as an aldehyde (PubMed:30908040). The oxidoreductases srdC, srdD and srdE then oxidize one of the hydroxy groups to facilitate the intramolecular aldol condensation, followed by dehydration to yield a salicylic aldehyde (PubMed:30908040). This aldehyde can undergo facile reduction by endogenous reductases to yield the alcohol 1-hydroxy-2-hydroxymethyl-3-pent-1,3-dienylbenzene (PubMed:30908040). The flavin-dependent srdI counteract against the propensity of the aldehydes to be reduced under physiological conditions and is responsible for reoxidizing 1-hydroxy-2-hydroxymethyl-3-pent-1,3-dienylbenzene back to the salicylic aldehyde (PubMed:30908040). This salicylic aldehyde is then selectively epoxidized by the cupin-domain-containing oxidoreductase srdB to yield the epoxide, which can be hydrolyzed stereoselectively by the hydrolase srdG to give the final product sordarial (PubMed:30908040).</text>
</comment>
<comment type="induction">
    <text evidence="3 4">Expression is up-regulated during sexual development (PubMed:19277664). Expression is also up-regulated during confrontation with the arthropod fungivore Drosophila melanogaster (PubMed:28485098).</text>
</comment>
<comment type="similarity">
    <text evidence="7">Belongs to the short-chain dehydrogenases/reductases (SDR) family.</text>
</comment>
<comment type="caution">
    <text evidence="4 5">A recent genetics report associated srdA and its cluster with the biosynthesis of furanocoumarin neurosporin A, a metabolite produced by N.crassa for chemoresistance against predation by arthropod fungivores (PubMed:28485098). However, based on the gene cluster organization and predicted gene functions, this cluster is unlikely to be involved in neurosporin A biosynthesis, but instead produces compounds similar to pyriculol (PubMed:30908040).</text>
</comment>
<name>SRDF_NEUCR</name>
<reference key="1">
    <citation type="journal article" date="2003" name="Nature">
        <title>The genome sequence of the filamentous fungus Neurospora crassa.</title>
        <authorList>
            <person name="Galagan J.E."/>
            <person name="Calvo S.E."/>
            <person name="Borkovich K.A."/>
            <person name="Selker E.U."/>
            <person name="Read N.D."/>
            <person name="Jaffe D.B."/>
            <person name="FitzHugh W."/>
            <person name="Ma L.-J."/>
            <person name="Smirnov S."/>
            <person name="Purcell S."/>
            <person name="Rehman B."/>
            <person name="Elkins T."/>
            <person name="Engels R."/>
            <person name="Wang S."/>
            <person name="Nielsen C.B."/>
            <person name="Butler J."/>
            <person name="Endrizzi M."/>
            <person name="Qui D."/>
            <person name="Ianakiev P."/>
            <person name="Bell-Pedersen D."/>
            <person name="Nelson M.A."/>
            <person name="Werner-Washburne M."/>
            <person name="Selitrennikoff C.P."/>
            <person name="Kinsey J.A."/>
            <person name="Braun E.L."/>
            <person name="Zelter A."/>
            <person name="Schulte U."/>
            <person name="Kothe G.O."/>
            <person name="Jedd G."/>
            <person name="Mewes H.-W."/>
            <person name="Staben C."/>
            <person name="Marcotte E."/>
            <person name="Greenberg D."/>
            <person name="Roy A."/>
            <person name="Foley K."/>
            <person name="Naylor J."/>
            <person name="Stange-Thomann N."/>
            <person name="Barrett R."/>
            <person name="Gnerre S."/>
            <person name="Kamal M."/>
            <person name="Kamvysselis M."/>
            <person name="Mauceli E.W."/>
            <person name="Bielke C."/>
            <person name="Rudd S."/>
            <person name="Frishman D."/>
            <person name="Krystofova S."/>
            <person name="Rasmussen C."/>
            <person name="Metzenberg R.L."/>
            <person name="Perkins D.D."/>
            <person name="Kroken S."/>
            <person name="Cogoni C."/>
            <person name="Macino G."/>
            <person name="Catcheside D.E.A."/>
            <person name="Li W."/>
            <person name="Pratt R.J."/>
            <person name="Osmani S.A."/>
            <person name="DeSouza C.P.C."/>
            <person name="Glass N.L."/>
            <person name="Orbach M.J."/>
            <person name="Berglund J.A."/>
            <person name="Voelker R."/>
            <person name="Yarden O."/>
            <person name="Plamann M."/>
            <person name="Seiler S."/>
            <person name="Dunlap J.C."/>
            <person name="Radford A."/>
            <person name="Aramayo R."/>
            <person name="Natvig D.O."/>
            <person name="Alex L.A."/>
            <person name="Mannhaupt G."/>
            <person name="Ebbole D.J."/>
            <person name="Freitag M."/>
            <person name="Paulsen I."/>
            <person name="Sachs M.S."/>
            <person name="Lander E.S."/>
            <person name="Nusbaum C."/>
            <person name="Birren B.W."/>
        </authorList>
    </citation>
    <scope>NUCLEOTIDE SEQUENCE [LARGE SCALE GENOMIC DNA]</scope>
    <source>
        <strain>ATCC 24698 / 74-OR23-1A / CBS 708.71 / DSM 1257 / FGSC 987</strain>
    </source>
</reference>
<reference key="2">
    <citation type="journal article" date="2009" name="Curr. Genet.">
        <title>A novel polyketide biosynthesis gene cluster is involved in fruiting body morphogenesis in the filamentous fungi Sordaria macrospora and Neurospora crassa.</title>
        <authorList>
            <person name="Nowrousian M."/>
        </authorList>
    </citation>
    <scope>FUNCTION</scope>
    <scope>INDUCTION</scope>
</reference>
<reference key="3">
    <citation type="journal article" date="2017" name="Environ. Microbiol.">
        <title>Production of a fungal furocoumarin by a polyketide synthase gene cluster confers the chemo-resistance of Neurospora crassa to the predation by fungivorous arthropods.</title>
        <authorList>
            <person name="Zhao Y."/>
            <person name="Ding J."/>
            <person name="Yuan W."/>
            <person name="Huang J."/>
            <person name="Huang W."/>
            <person name="Wang Y."/>
            <person name="Zheng W."/>
        </authorList>
    </citation>
    <scope>FUNCTION</scope>
    <scope>INDUCTION</scope>
</reference>
<reference key="4">
    <citation type="journal article" date="2019" name="J. Nat. Prod.">
        <title>Genome mining reveals Neurospora crassa can produce the salicylaldehyde sordarial.</title>
        <authorList>
            <person name="Zhao Z."/>
            <person name="Ying Y."/>
            <person name="Hung Y.S."/>
            <person name="Tang Y."/>
        </authorList>
    </citation>
    <scope>FUNCTION</scope>
    <scope>PATHWAY</scope>
</reference>
<protein>
    <recommendedName>
        <fullName evidence="6">Short-chain dehydrogenase srdF</fullName>
        <ecNumber evidence="8">1.1.1.-</ecNumber>
    </recommendedName>
    <alternativeName>
        <fullName evidence="6">Sordarial biosynthesis cluster protein srdF</fullName>
    </alternativeName>
</protein>
<organism>
    <name type="scientific">Neurospora crassa (strain ATCC 24698 / 74-OR23-1A / CBS 708.71 / DSM 1257 / FGSC 987)</name>
    <dbReference type="NCBI Taxonomy" id="367110"/>
    <lineage>
        <taxon>Eukaryota</taxon>
        <taxon>Fungi</taxon>
        <taxon>Dikarya</taxon>
        <taxon>Ascomycota</taxon>
        <taxon>Pezizomycotina</taxon>
        <taxon>Sordariomycetes</taxon>
        <taxon>Sordariomycetidae</taxon>
        <taxon>Sordariales</taxon>
        <taxon>Sordariaceae</taxon>
        <taxon>Neurospora</taxon>
    </lineage>
</organism>
<proteinExistence type="evidence at transcript level"/>
<accession>Q7SHI1</accession>
<feature type="chain" id="PRO_0000449335" description="Short-chain dehydrogenase srdF">
    <location>
        <begin position="1"/>
        <end position="254"/>
    </location>
</feature>
<feature type="active site" description="Proton donor" evidence="2">
    <location>
        <position position="167"/>
    </location>
</feature>
<feature type="active site" description="Lowers pKa of active site Tyr" evidence="2">
    <location>
        <position position="171"/>
    </location>
</feature>
<feature type="binding site" evidence="1">
    <location>
        <position position="18"/>
    </location>
    <ligand>
        <name>NADP(+)</name>
        <dbReference type="ChEBI" id="CHEBI:58349"/>
    </ligand>
</feature>
<feature type="binding site" evidence="1">
    <location>
        <position position="37"/>
    </location>
    <ligand>
        <name>NADP(+)</name>
        <dbReference type="ChEBI" id="CHEBI:58349"/>
    </ligand>
</feature>
<feature type="binding site" evidence="1">
    <location>
        <position position="67"/>
    </location>
    <ligand>
        <name>NADP(+)</name>
        <dbReference type="ChEBI" id="CHEBI:58349"/>
    </ligand>
</feature>
<feature type="binding site" evidence="2">
    <location>
        <position position="95"/>
    </location>
    <ligand>
        <name>NADP(+)</name>
        <dbReference type="ChEBI" id="CHEBI:58349"/>
    </ligand>
</feature>
<feature type="binding site" evidence="2">
    <location>
        <position position="167"/>
    </location>
    <ligand>
        <name>NADP(+)</name>
        <dbReference type="ChEBI" id="CHEBI:58349"/>
    </ligand>
</feature>
<feature type="binding site" evidence="2">
    <location>
        <position position="171"/>
    </location>
    <ligand>
        <name>NADP(+)</name>
        <dbReference type="ChEBI" id="CHEBI:58349"/>
    </ligand>
</feature>
<feature type="binding site" evidence="2">
    <location>
        <position position="199"/>
    </location>
    <ligand>
        <name>NADP(+)</name>
        <dbReference type="ChEBI" id="CHEBI:58349"/>
    </ligand>
</feature>
<feature type="binding site" evidence="1">
    <location>
        <position position="201"/>
    </location>
    <ligand>
        <name>NADP(+)</name>
        <dbReference type="ChEBI" id="CHEBI:58349"/>
    </ligand>
</feature>
<dbReference type="EC" id="1.1.1.-" evidence="8"/>
<dbReference type="EMBL" id="CM002236">
    <property type="protein sequence ID" value="EAA36369.1"/>
    <property type="molecule type" value="Genomic_DNA"/>
</dbReference>
<dbReference type="RefSeq" id="XP_965605.1">
    <property type="nucleotide sequence ID" value="XM_960512.2"/>
</dbReference>
<dbReference type="SMR" id="Q7SHI1"/>
<dbReference type="FunCoup" id="Q7SHI1">
    <property type="interactions" value="66"/>
</dbReference>
<dbReference type="PaxDb" id="5141-EFNCRP00000002404"/>
<dbReference type="EnsemblFungi" id="EAA36369">
    <property type="protein sequence ID" value="EAA36369"/>
    <property type="gene ID" value="NCU02923"/>
</dbReference>
<dbReference type="GeneID" id="3881730"/>
<dbReference type="KEGG" id="ncr:NCU02923"/>
<dbReference type="VEuPathDB" id="FungiDB:NCU02923"/>
<dbReference type="HOGENOM" id="CLU_010194_9_1_1"/>
<dbReference type="InParanoid" id="Q7SHI1"/>
<dbReference type="OMA" id="WILPAYG"/>
<dbReference type="OrthoDB" id="9876299at2759"/>
<dbReference type="Proteomes" id="UP000001805">
    <property type="component" value="Chromosome 1, Linkage Group I"/>
</dbReference>
<dbReference type="GO" id="GO:0005737">
    <property type="term" value="C:cytoplasm"/>
    <property type="evidence" value="ECO:0000318"/>
    <property type="project" value="GO_Central"/>
</dbReference>
<dbReference type="GO" id="GO:0016491">
    <property type="term" value="F:oxidoreductase activity"/>
    <property type="evidence" value="ECO:0000318"/>
    <property type="project" value="GO_Central"/>
</dbReference>
<dbReference type="Gene3D" id="3.40.50.720">
    <property type="entry name" value="NAD(P)-binding Rossmann-like Domain"/>
    <property type="match status" value="1"/>
</dbReference>
<dbReference type="InterPro" id="IPR051468">
    <property type="entry name" value="Fungal_SecMetab_SDRs"/>
</dbReference>
<dbReference type="InterPro" id="IPR036291">
    <property type="entry name" value="NAD(P)-bd_dom_sf"/>
</dbReference>
<dbReference type="InterPro" id="IPR002347">
    <property type="entry name" value="SDR_fam"/>
</dbReference>
<dbReference type="PANTHER" id="PTHR43544:SF7">
    <property type="entry name" value="NADB-LER2"/>
    <property type="match status" value="1"/>
</dbReference>
<dbReference type="PANTHER" id="PTHR43544">
    <property type="entry name" value="SHORT-CHAIN DEHYDROGENASE/REDUCTASE"/>
    <property type="match status" value="1"/>
</dbReference>
<dbReference type="Pfam" id="PF00106">
    <property type="entry name" value="adh_short"/>
    <property type="match status" value="1"/>
</dbReference>
<dbReference type="PRINTS" id="PR00081">
    <property type="entry name" value="GDHRDH"/>
</dbReference>
<dbReference type="SUPFAM" id="SSF51735">
    <property type="entry name" value="NAD(P)-binding Rossmann-fold domains"/>
    <property type="match status" value="1"/>
</dbReference>
<gene>
    <name evidence="6" type="primary">srdF</name>
    <name type="ORF">NCU02923</name>
</gene>
<keyword id="KW-0521">NADP</keyword>
<keyword id="KW-0560">Oxidoreductase</keyword>
<keyword id="KW-1185">Reference proteome</keyword>
<evidence type="ECO:0000250" key="1">
    <source>
        <dbReference type="UniProtKB" id="L0E2Z4"/>
    </source>
</evidence>
<evidence type="ECO:0000250" key="2">
    <source>
        <dbReference type="UniProtKB" id="O93868"/>
    </source>
</evidence>
<evidence type="ECO:0000269" key="3">
    <source>
    </source>
</evidence>
<evidence type="ECO:0000269" key="4">
    <source>
    </source>
</evidence>
<evidence type="ECO:0000269" key="5">
    <source>
    </source>
</evidence>
<evidence type="ECO:0000303" key="6">
    <source>
    </source>
</evidence>
<evidence type="ECO:0000305" key="7"/>
<evidence type="ECO:0000305" key="8">
    <source>
    </source>
</evidence>